<keyword id="KW-0963">Cytoplasm</keyword>
<keyword id="KW-0206">Cytoskeleton</keyword>
<keyword id="KW-0597">Phosphoprotein</keyword>
<keyword id="KW-1267">Proteomics identification</keyword>
<keyword id="KW-1185">Reference proteome</keyword>
<gene>
    <name type="primary">MZT2B</name>
    <name type="synonym">FAM128B</name>
    <name type="synonym">MOZART2B</name>
</gene>
<name>MZT2B_HUMAN</name>
<proteinExistence type="evidence at protein level"/>
<comment type="function">
    <text evidence="2 3">Required for the recruitment and the assembly of the gamma-tubulin ring complex (gTuRC) at the centrosome (PubMed:20360068, PubMed:39321809). The gTuRC regulates the minus-end nucleation of alpha-beta tubulin heterodimers that grow into microtubule protafilaments, a critical step in centrosome duplication and spindle formation (PubMed:39321809).</text>
</comment>
<comment type="subunit">
    <text evidence="2 3">Associates with the gamma-tubulin ring complex (gTuRC) consisting of TUBGCP2, TUBGCP3, TUBGCP4, TUBGCP5 and TUBGCP6 and gamma-tubulin TUBG1 or TUBG2; within the complex, interacts with TUBGCP2; the interaction plays a role in gTuRC activation (PubMed:20360068, PubMed:39321809). Interacts with TUBG1 (PubMed:20360068).</text>
</comment>
<comment type="interaction">
    <interactant intactId="EBI-1052566">
        <id>Q6NZ67</id>
    </interactant>
    <interactant intactId="EBI-302589">
        <id>P23258</id>
        <label>TUBG1</label>
    </interactant>
    <organismsDiffer>false</organismsDiffer>
    <experiments>5</experiments>
</comment>
<comment type="subcellular location">
    <subcellularLocation>
        <location evidence="2">Cytoplasm</location>
        <location evidence="2">Cytoskeleton</location>
        <location evidence="2">Microtubule organizing center</location>
        <location evidence="2">Centrosome</location>
    </subcellularLocation>
    <subcellularLocation>
        <location evidence="2">Cytoplasm</location>
        <location evidence="2">Cytoskeleton</location>
        <location evidence="2">Spindle</location>
    </subcellularLocation>
</comment>
<comment type="similarity">
    <text evidence="4">Belongs to the MOZART2 family.</text>
</comment>
<reference key="1">
    <citation type="submission" date="2005-07" db="EMBL/GenBank/DDBJ databases">
        <authorList>
            <person name="Mural R.J."/>
            <person name="Istrail S."/>
            <person name="Sutton G.G."/>
            <person name="Florea L."/>
            <person name="Halpern A.L."/>
            <person name="Mobarry C.M."/>
            <person name="Lippert R."/>
            <person name="Walenz B."/>
            <person name="Shatkay H."/>
            <person name="Dew I."/>
            <person name="Miller J.R."/>
            <person name="Flanigan M.J."/>
            <person name="Edwards N.J."/>
            <person name="Bolanos R."/>
            <person name="Fasulo D."/>
            <person name="Halldorsson B.V."/>
            <person name="Hannenhalli S."/>
            <person name="Turner R."/>
            <person name="Yooseph S."/>
            <person name="Lu F."/>
            <person name="Nusskern D.R."/>
            <person name="Shue B.C."/>
            <person name="Zheng X.H."/>
            <person name="Zhong F."/>
            <person name="Delcher A.L."/>
            <person name="Huson D.H."/>
            <person name="Kravitz S.A."/>
            <person name="Mouchard L."/>
            <person name="Reinert K."/>
            <person name="Remington K.A."/>
            <person name="Clark A.G."/>
            <person name="Waterman M.S."/>
            <person name="Eichler E.E."/>
            <person name="Adams M.D."/>
            <person name="Hunkapiller M.W."/>
            <person name="Myers E.W."/>
            <person name="Venter J.C."/>
        </authorList>
    </citation>
    <scope>NUCLEOTIDE SEQUENCE [LARGE SCALE GENOMIC DNA]</scope>
</reference>
<reference key="2">
    <citation type="journal article" date="2004" name="Genome Res.">
        <title>The status, quality, and expansion of the NIH full-length cDNA project: the Mammalian Gene Collection (MGC).</title>
        <authorList>
            <consortium name="The MGC Project Team"/>
        </authorList>
    </citation>
    <scope>NUCLEOTIDE SEQUENCE [LARGE SCALE MRNA]</scope>
    <source>
        <tissue>Brain</tissue>
        <tissue>Eye</tissue>
    </source>
</reference>
<reference key="3">
    <citation type="journal article" date="2009" name="Sci. Signal.">
        <title>Quantitative phosphoproteomic analysis of T cell receptor signaling reveals system-wide modulation of protein-protein interactions.</title>
        <authorList>
            <person name="Mayya V."/>
            <person name="Lundgren D.H."/>
            <person name="Hwang S.-I."/>
            <person name="Rezaul K."/>
            <person name="Wu L."/>
            <person name="Eng J.K."/>
            <person name="Rodionov V."/>
            <person name="Han D.K."/>
        </authorList>
    </citation>
    <scope>PHOSPHORYLATION [LARGE SCALE ANALYSIS] AT SER-34</scope>
    <scope>IDENTIFICATION BY MASS SPECTROMETRY [LARGE SCALE ANALYSIS]</scope>
    <source>
        <tissue>Leukemic T-cell</tissue>
    </source>
</reference>
<reference key="4">
    <citation type="journal article" date="2010" name="Sci. Signal.">
        <title>Quantitative phosphoproteomics reveals widespread full phosphorylation site occupancy during mitosis.</title>
        <authorList>
            <person name="Olsen J.V."/>
            <person name="Vermeulen M."/>
            <person name="Santamaria A."/>
            <person name="Kumar C."/>
            <person name="Miller M.L."/>
            <person name="Jensen L.J."/>
            <person name="Gnad F."/>
            <person name="Cox J."/>
            <person name="Jensen T.S."/>
            <person name="Nigg E.A."/>
            <person name="Brunak S."/>
            <person name="Mann M."/>
        </authorList>
    </citation>
    <scope>PHOSPHORYLATION [LARGE SCALE ANALYSIS] AT SER-152</scope>
    <scope>IDENTIFICATION BY MASS SPECTROMETRY [LARGE SCALE ANALYSIS]</scope>
    <source>
        <tissue>Cervix carcinoma</tissue>
    </source>
</reference>
<reference key="5">
    <citation type="journal article" date="2010" name="Science">
        <title>Systematic analysis of human protein complexes identifies chromosome segregation proteins.</title>
        <authorList>
            <person name="Hutchins J.R."/>
            <person name="Toyoda Y."/>
            <person name="Hegemann B."/>
            <person name="Poser I."/>
            <person name="Heriche J.K."/>
            <person name="Sykora M.M."/>
            <person name="Augsburg M."/>
            <person name="Hudecz O."/>
            <person name="Buschhorn B.A."/>
            <person name="Bulkescher J."/>
            <person name="Conrad C."/>
            <person name="Comartin D."/>
            <person name="Schleiffer A."/>
            <person name="Sarov M."/>
            <person name="Pozniakovsky A."/>
            <person name="Slabicki M.M."/>
            <person name="Schloissnig S."/>
            <person name="Steinmacher I."/>
            <person name="Leuschner M."/>
            <person name="Ssykor A."/>
            <person name="Lawo S."/>
            <person name="Pelletier L."/>
            <person name="Stark H."/>
            <person name="Nasmyth K."/>
            <person name="Ellenberg J."/>
            <person name="Durbin R."/>
            <person name="Buchholz F."/>
            <person name="Mechtler K."/>
            <person name="Hyman A.A."/>
            <person name="Peters J.M."/>
        </authorList>
    </citation>
    <scope>SUBCELLULAR LOCATION</scope>
    <scope>INTERACTION WITH TUBG1</scope>
</reference>
<reference key="6">
    <citation type="journal article" date="2011" name="BMC Syst. Biol.">
        <title>Initial characterization of the human central proteome.</title>
        <authorList>
            <person name="Burkard T.R."/>
            <person name="Planyavsky M."/>
            <person name="Kaupe I."/>
            <person name="Breitwieser F.P."/>
            <person name="Buerckstuemmer T."/>
            <person name="Bennett K.L."/>
            <person name="Superti-Furga G."/>
            <person name="Colinge J."/>
        </authorList>
    </citation>
    <scope>IDENTIFICATION BY MASS SPECTROMETRY [LARGE SCALE ANALYSIS]</scope>
</reference>
<reference key="7">
    <citation type="journal article" date="2024" name="Dev. Cell">
        <title>CDK5RAP2 activates microtubule nucleator gammaTuRC by facilitating template formation and actin release.</title>
        <authorList>
            <person name="Serna M."/>
            <person name="Zimmermann F."/>
            <person name="Vineethakumari C."/>
            <person name="Gonzalez-Rodriguez N."/>
            <person name="Llorca O."/>
            <person name="Luders J."/>
        </authorList>
    </citation>
    <scope>FUNCTION</scope>
    <scope>SUBUNIT</scope>
    <scope>INTERACTION WITH THE GAMMA-TUBULIN RING COMPLEX</scope>
</reference>
<sequence length="158" mass="16226">MAAQGVGPGPGSAAPPGLEAARQKLALRRKKVLSTEEMELYELAQAAGGAIDPDVFKILVDLLKLNVAPLAVFQMLKSMCAGQRLASEPQDPAAVSLPTSSVPETRGRNKGSAALGGALALAERSSREGSSQRMPRQPSATRLPKGGGPGKSPTRGST</sequence>
<accession>Q6NZ67</accession>
<accession>Q96CG4</accession>
<protein>
    <recommendedName>
        <fullName>Mitotic-spindle organizing protein 2B</fullName>
    </recommendedName>
    <alternativeName>
        <fullName>Mitotic-spindle organizing protein associated with a ring of gamma-tubulin 2B</fullName>
    </alternativeName>
</protein>
<dbReference type="EMBL" id="CH471263">
    <property type="protein sequence ID" value="EAW55603.1"/>
    <property type="molecule type" value="Genomic_DNA"/>
</dbReference>
<dbReference type="EMBL" id="BC014255">
    <property type="protein sequence ID" value="AAH14255.2"/>
    <property type="molecule type" value="mRNA"/>
</dbReference>
<dbReference type="EMBL" id="BC066296">
    <property type="protein sequence ID" value="AAH66296.1"/>
    <property type="molecule type" value="mRNA"/>
</dbReference>
<dbReference type="CCDS" id="CCDS2157.1"/>
<dbReference type="RefSeq" id="NP_079305.2">
    <property type="nucleotide sequence ID" value="NM_025029.4"/>
</dbReference>
<dbReference type="SMR" id="Q6NZ67"/>
<dbReference type="BioGRID" id="123111">
    <property type="interactions" value="92"/>
</dbReference>
<dbReference type="FunCoup" id="Q6NZ67">
    <property type="interactions" value="1085"/>
</dbReference>
<dbReference type="IntAct" id="Q6NZ67">
    <property type="interactions" value="70"/>
</dbReference>
<dbReference type="MINT" id="Q6NZ67"/>
<dbReference type="iPTMnet" id="Q6NZ67"/>
<dbReference type="PhosphoSitePlus" id="Q6NZ67"/>
<dbReference type="BioMuta" id="MZT2B"/>
<dbReference type="jPOST" id="Q6NZ67"/>
<dbReference type="MassIVE" id="Q6NZ67"/>
<dbReference type="PaxDb" id="9606-ENSP00000281871"/>
<dbReference type="PeptideAtlas" id="Q6NZ67"/>
<dbReference type="ProteomicsDB" id="66793"/>
<dbReference type="Pumba" id="Q6NZ67"/>
<dbReference type="TopDownProteomics" id="Q6NZ67"/>
<dbReference type="Antibodypedia" id="77852">
    <property type="antibodies" value="20 antibodies from 10 providers"/>
</dbReference>
<dbReference type="DNASU" id="80097"/>
<dbReference type="Ensembl" id="ENST00000281871.11">
    <property type="protein sequence ID" value="ENSP00000281871.7"/>
    <property type="gene ID" value="ENSG00000152082.15"/>
</dbReference>
<dbReference type="Ensembl" id="ENST00000709784.1">
    <property type="protein sequence ID" value="ENSP00000517875.1"/>
    <property type="gene ID" value="ENSG00000292119.1"/>
</dbReference>
<dbReference type="GeneID" id="80097"/>
<dbReference type="KEGG" id="hsa:80097"/>
<dbReference type="MANE-Select" id="ENST00000281871.11">
    <property type="protein sequence ID" value="ENSP00000281871.7"/>
    <property type="RefSeq nucleotide sequence ID" value="NM_025029.5"/>
    <property type="RefSeq protein sequence ID" value="NP_079305.2"/>
</dbReference>
<dbReference type="UCSC" id="uc002tqu.3">
    <property type="organism name" value="human"/>
</dbReference>
<dbReference type="AGR" id="HGNC:25886"/>
<dbReference type="CTD" id="80097"/>
<dbReference type="DisGeNET" id="80097"/>
<dbReference type="GeneCards" id="MZT2B"/>
<dbReference type="HGNC" id="HGNC:25886">
    <property type="gene designation" value="MZT2B"/>
</dbReference>
<dbReference type="HPA" id="ENSG00000152082">
    <property type="expression patterns" value="Low tissue specificity"/>
</dbReference>
<dbReference type="MIM" id="613450">
    <property type="type" value="gene"/>
</dbReference>
<dbReference type="neXtProt" id="NX_Q6NZ67"/>
<dbReference type="OpenTargets" id="ENSG00000152082"/>
<dbReference type="PharmGKB" id="PA165696943"/>
<dbReference type="VEuPathDB" id="HostDB:ENSG00000152082"/>
<dbReference type="eggNOG" id="ENOG502S50R">
    <property type="taxonomic scope" value="Eukaryota"/>
</dbReference>
<dbReference type="GeneTree" id="ENSGT00390000014845"/>
<dbReference type="HOGENOM" id="CLU_105461_0_0_1"/>
<dbReference type="InParanoid" id="Q6NZ67"/>
<dbReference type="OrthoDB" id="10064769at2759"/>
<dbReference type="PAN-GO" id="Q6NZ67">
    <property type="GO annotations" value="2 GO annotations based on evolutionary models"/>
</dbReference>
<dbReference type="PhylomeDB" id="Q6NZ67"/>
<dbReference type="TreeFam" id="TF333013"/>
<dbReference type="PathwayCommons" id="Q6NZ67"/>
<dbReference type="Reactome" id="R-HSA-380270">
    <property type="pathway name" value="Recruitment of mitotic centrosome proteins and complexes"/>
</dbReference>
<dbReference type="Reactome" id="R-HSA-380320">
    <property type="pathway name" value="Recruitment of NuMA to mitotic centrosomes"/>
</dbReference>
<dbReference type="SignaLink" id="Q6NZ67"/>
<dbReference type="BioGRID-ORCS" id="80097">
    <property type="hits" value="18 hits in 1101 CRISPR screens"/>
</dbReference>
<dbReference type="ChiTaRS" id="MZT2B">
    <property type="organism name" value="human"/>
</dbReference>
<dbReference type="GenomeRNAi" id="80097"/>
<dbReference type="Pharos" id="Q6NZ67">
    <property type="development level" value="Tdark"/>
</dbReference>
<dbReference type="PRO" id="PR:Q6NZ67"/>
<dbReference type="Proteomes" id="UP000005640">
    <property type="component" value="Chromosome 2"/>
</dbReference>
<dbReference type="RNAct" id="Q6NZ67">
    <property type="molecule type" value="protein"/>
</dbReference>
<dbReference type="Bgee" id="ENSG00000152082">
    <property type="expression patterns" value="Expressed in apex of heart and 196 other cell types or tissues"/>
</dbReference>
<dbReference type="ExpressionAtlas" id="Q6NZ67">
    <property type="expression patterns" value="baseline and differential"/>
</dbReference>
<dbReference type="GO" id="GO:0005813">
    <property type="term" value="C:centrosome"/>
    <property type="evidence" value="ECO:0000314"/>
    <property type="project" value="UniProtKB"/>
</dbReference>
<dbReference type="GO" id="GO:0005829">
    <property type="term" value="C:cytosol"/>
    <property type="evidence" value="ECO:0000314"/>
    <property type="project" value="HPA"/>
</dbReference>
<dbReference type="GO" id="GO:0000931">
    <property type="term" value="C:gamma-tubulin ring complex"/>
    <property type="evidence" value="ECO:0000314"/>
    <property type="project" value="UniProtKB"/>
</dbReference>
<dbReference type="GO" id="GO:0005654">
    <property type="term" value="C:nucleoplasm"/>
    <property type="evidence" value="ECO:0000314"/>
    <property type="project" value="HPA"/>
</dbReference>
<dbReference type="GO" id="GO:0005819">
    <property type="term" value="C:spindle"/>
    <property type="evidence" value="ECO:0000314"/>
    <property type="project" value="UniProtKB"/>
</dbReference>
<dbReference type="InterPro" id="IPR024332">
    <property type="entry name" value="MOZART2"/>
</dbReference>
<dbReference type="PANTHER" id="PTHR28578:SF2">
    <property type="entry name" value="MITOTIC-SPINDLE ORGANIZING PROTEIN 2"/>
    <property type="match status" value="1"/>
</dbReference>
<dbReference type="PANTHER" id="PTHR28578">
    <property type="entry name" value="MITOTIC-SPINDLE ORGANIZING PROTEIN 2A-RELATED"/>
    <property type="match status" value="1"/>
</dbReference>
<dbReference type="Pfam" id="PF12926">
    <property type="entry name" value="MOZART2"/>
    <property type="match status" value="1"/>
</dbReference>
<feature type="chain" id="PRO_0000338988" description="Mitotic-spindle organizing protein 2B">
    <location>
        <begin position="1"/>
        <end position="158"/>
    </location>
</feature>
<feature type="region of interest" description="Disordered" evidence="1">
    <location>
        <begin position="84"/>
        <end position="158"/>
    </location>
</feature>
<feature type="compositionally biased region" description="Low complexity" evidence="1">
    <location>
        <begin position="111"/>
        <end position="122"/>
    </location>
</feature>
<feature type="compositionally biased region" description="Polar residues" evidence="1">
    <location>
        <begin position="128"/>
        <end position="140"/>
    </location>
</feature>
<feature type="modified residue" description="Phosphoserine" evidence="5">
    <location>
        <position position="34"/>
    </location>
</feature>
<feature type="modified residue" description="Phosphoserine" evidence="6">
    <location>
        <position position="152"/>
    </location>
</feature>
<feature type="sequence variant" id="VAR_043853" description="In dbSNP:rs1043059.">
    <original>A</original>
    <variation>V</variation>
    <location>
        <position position="118"/>
    </location>
</feature>
<feature type="sequence variant" id="VAR_043854" description="In dbSNP:rs1043152.">
    <original>R</original>
    <variation>Q</variation>
    <location>
        <position position="155"/>
    </location>
</feature>
<evidence type="ECO:0000256" key="1">
    <source>
        <dbReference type="SAM" id="MobiDB-lite"/>
    </source>
</evidence>
<evidence type="ECO:0000269" key="2">
    <source>
    </source>
</evidence>
<evidence type="ECO:0000269" key="3">
    <source>
    </source>
</evidence>
<evidence type="ECO:0000305" key="4"/>
<evidence type="ECO:0007744" key="5">
    <source>
    </source>
</evidence>
<evidence type="ECO:0007744" key="6">
    <source>
    </source>
</evidence>
<organism>
    <name type="scientific">Homo sapiens</name>
    <name type="common">Human</name>
    <dbReference type="NCBI Taxonomy" id="9606"/>
    <lineage>
        <taxon>Eukaryota</taxon>
        <taxon>Metazoa</taxon>
        <taxon>Chordata</taxon>
        <taxon>Craniata</taxon>
        <taxon>Vertebrata</taxon>
        <taxon>Euteleostomi</taxon>
        <taxon>Mammalia</taxon>
        <taxon>Eutheria</taxon>
        <taxon>Euarchontoglires</taxon>
        <taxon>Primates</taxon>
        <taxon>Haplorrhini</taxon>
        <taxon>Catarrhini</taxon>
        <taxon>Hominidae</taxon>
        <taxon>Homo</taxon>
    </lineage>
</organism>